<name>RRF_TERTT</name>
<gene>
    <name evidence="1" type="primary">frr</name>
    <name type="ordered locus">TERTU_1008</name>
</gene>
<sequence length="185" mass="20683">MINDIKKDAEARMKKTVEALGINFNKIRTGRAHPSILDGVSVSYYGSDTPLSQVANISVLDARTLSLSPWEKSMVPEIEKAIMKSDLGLNPVTTGELIRVPMPALTEESRKGYIKQAKTEAEQARVSIRNVRRDVLADVKELLKEKEISEDDDRRAQDDIQKITDKYVAEVDAALAVKEKDLMEI</sequence>
<proteinExistence type="inferred from homology"/>
<organism>
    <name type="scientific">Teredinibacter turnerae (strain ATCC 39867 / T7901)</name>
    <dbReference type="NCBI Taxonomy" id="377629"/>
    <lineage>
        <taxon>Bacteria</taxon>
        <taxon>Pseudomonadati</taxon>
        <taxon>Pseudomonadota</taxon>
        <taxon>Gammaproteobacteria</taxon>
        <taxon>Cellvibrionales</taxon>
        <taxon>Cellvibrionaceae</taxon>
        <taxon>Teredinibacter</taxon>
    </lineage>
</organism>
<accession>C5BQF9</accession>
<evidence type="ECO:0000255" key="1">
    <source>
        <dbReference type="HAMAP-Rule" id="MF_00040"/>
    </source>
</evidence>
<protein>
    <recommendedName>
        <fullName evidence="1">Ribosome-recycling factor</fullName>
        <shortName evidence="1">RRF</shortName>
    </recommendedName>
    <alternativeName>
        <fullName evidence="1">Ribosome-releasing factor</fullName>
    </alternativeName>
</protein>
<comment type="function">
    <text evidence="1">Responsible for the release of ribosomes from messenger RNA at the termination of protein biosynthesis. May increase the efficiency of translation by recycling ribosomes from one round of translation to another.</text>
</comment>
<comment type="subcellular location">
    <subcellularLocation>
        <location evidence="1">Cytoplasm</location>
    </subcellularLocation>
</comment>
<comment type="similarity">
    <text evidence="1">Belongs to the RRF family.</text>
</comment>
<reference key="1">
    <citation type="journal article" date="2009" name="PLoS ONE">
        <title>The complete genome of Teredinibacter turnerae T7901: an intracellular endosymbiont of marine wood-boring bivalves (shipworms).</title>
        <authorList>
            <person name="Yang J.C."/>
            <person name="Madupu R."/>
            <person name="Durkin A.S."/>
            <person name="Ekborg N.A."/>
            <person name="Pedamallu C.S."/>
            <person name="Hostetler J.B."/>
            <person name="Radune D."/>
            <person name="Toms B.S."/>
            <person name="Henrissat B."/>
            <person name="Coutinho P.M."/>
            <person name="Schwarz S."/>
            <person name="Field L."/>
            <person name="Trindade-Silva A.E."/>
            <person name="Soares C.A.G."/>
            <person name="Elshahawi S."/>
            <person name="Hanora A."/>
            <person name="Schmidt E.W."/>
            <person name="Haygood M.G."/>
            <person name="Posfai J."/>
            <person name="Benner J."/>
            <person name="Madinger C."/>
            <person name="Nove J."/>
            <person name="Anton B."/>
            <person name="Chaudhary K."/>
            <person name="Foster J."/>
            <person name="Holman A."/>
            <person name="Kumar S."/>
            <person name="Lessard P.A."/>
            <person name="Luyten Y.A."/>
            <person name="Slatko B."/>
            <person name="Wood N."/>
            <person name="Wu B."/>
            <person name="Teplitski M."/>
            <person name="Mougous J.D."/>
            <person name="Ward N."/>
            <person name="Eisen J.A."/>
            <person name="Badger J.H."/>
            <person name="Distel D.L."/>
        </authorList>
    </citation>
    <scope>NUCLEOTIDE SEQUENCE [LARGE SCALE GENOMIC DNA]</scope>
    <source>
        <strain>ATCC 39867 / T7901</strain>
    </source>
</reference>
<feature type="chain" id="PRO_1000202112" description="Ribosome-recycling factor">
    <location>
        <begin position="1"/>
        <end position="185"/>
    </location>
</feature>
<keyword id="KW-0963">Cytoplasm</keyword>
<keyword id="KW-0648">Protein biosynthesis</keyword>
<keyword id="KW-1185">Reference proteome</keyword>
<dbReference type="EMBL" id="CP001614">
    <property type="protein sequence ID" value="ACR12236.1"/>
    <property type="molecule type" value="Genomic_DNA"/>
</dbReference>
<dbReference type="RefSeq" id="WP_015818348.1">
    <property type="nucleotide sequence ID" value="NC_012997.1"/>
</dbReference>
<dbReference type="SMR" id="C5BQF9"/>
<dbReference type="STRING" id="377629.TERTU_1008"/>
<dbReference type="GeneID" id="58408779"/>
<dbReference type="GeneID" id="93857645"/>
<dbReference type="KEGG" id="ttu:TERTU_1008"/>
<dbReference type="eggNOG" id="COG0233">
    <property type="taxonomic scope" value="Bacteria"/>
</dbReference>
<dbReference type="HOGENOM" id="CLU_073981_2_1_6"/>
<dbReference type="OrthoDB" id="9804006at2"/>
<dbReference type="Proteomes" id="UP000009080">
    <property type="component" value="Chromosome"/>
</dbReference>
<dbReference type="GO" id="GO:0005829">
    <property type="term" value="C:cytosol"/>
    <property type="evidence" value="ECO:0007669"/>
    <property type="project" value="GOC"/>
</dbReference>
<dbReference type="GO" id="GO:0043023">
    <property type="term" value="F:ribosomal large subunit binding"/>
    <property type="evidence" value="ECO:0007669"/>
    <property type="project" value="TreeGrafter"/>
</dbReference>
<dbReference type="GO" id="GO:0002184">
    <property type="term" value="P:cytoplasmic translational termination"/>
    <property type="evidence" value="ECO:0007669"/>
    <property type="project" value="TreeGrafter"/>
</dbReference>
<dbReference type="CDD" id="cd00520">
    <property type="entry name" value="RRF"/>
    <property type="match status" value="1"/>
</dbReference>
<dbReference type="FunFam" id="1.10.132.20:FF:000001">
    <property type="entry name" value="Ribosome-recycling factor"/>
    <property type="match status" value="1"/>
</dbReference>
<dbReference type="FunFam" id="3.30.1360.40:FF:000001">
    <property type="entry name" value="Ribosome-recycling factor"/>
    <property type="match status" value="1"/>
</dbReference>
<dbReference type="Gene3D" id="3.30.1360.40">
    <property type="match status" value="1"/>
</dbReference>
<dbReference type="Gene3D" id="1.10.132.20">
    <property type="entry name" value="Ribosome-recycling factor"/>
    <property type="match status" value="1"/>
</dbReference>
<dbReference type="HAMAP" id="MF_00040">
    <property type="entry name" value="RRF"/>
    <property type="match status" value="1"/>
</dbReference>
<dbReference type="InterPro" id="IPR002661">
    <property type="entry name" value="Ribosome_recyc_fac"/>
</dbReference>
<dbReference type="InterPro" id="IPR023584">
    <property type="entry name" value="Ribosome_recyc_fac_dom"/>
</dbReference>
<dbReference type="InterPro" id="IPR036191">
    <property type="entry name" value="RRF_sf"/>
</dbReference>
<dbReference type="NCBIfam" id="TIGR00496">
    <property type="entry name" value="frr"/>
    <property type="match status" value="1"/>
</dbReference>
<dbReference type="PANTHER" id="PTHR20982:SF3">
    <property type="entry name" value="MITOCHONDRIAL RIBOSOME RECYCLING FACTOR PSEUDO 1"/>
    <property type="match status" value="1"/>
</dbReference>
<dbReference type="PANTHER" id="PTHR20982">
    <property type="entry name" value="RIBOSOME RECYCLING FACTOR"/>
    <property type="match status" value="1"/>
</dbReference>
<dbReference type="Pfam" id="PF01765">
    <property type="entry name" value="RRF"/>
    <property type="match status" value="1"/>
</dbReference>
<dbReference type="SUPFAM" id="SSF55194">
    <property type="entry name" value="Ribosome recycling factor, RRF"/>
    <property type="match status" value="1"/>
</dbReference>